<accession>Q3ANV2</accession>
<reference key="1">
    <citation type="submission" date="2005-08" db="EMBL/GenBank/DDBJ databases">
        <title>Complete sequence of Chlorobium chlorochromatii CaD3.</title>
        <authorList>
            <consortium name="US DOE Joint Genome Institute"/>
            <person name="Copeland A."/>
            <person name="Lucas S."/>
            <person name="Lapidus A."/>
            <person name="Barry K."/>
            <person name="Detter J.C."/>
            <person name="Glavina T."/>
            <person name="Hammon N."/>
            <person name="Israni S."/>
            <person name="Pitluck S."/>
            <person name="Bryant D."/>
            <person name="Schmutz J."/>
            <person name="Larimer F."/>
            <person name="Land M."/>
            <person name="Kyrpides N."/>
            <person name="Ivanova N."/>
            <person name="Richardson P."/>
        </authorList>
    </citation>
    <scope>NUCLEOTIDE SEQUENCE [LARGE SCALE GENOMIC DNA]</scope>
    <source>
        <strain>CaD3</strain>
    </source>
</reference>
<dbReference type="EC" id="6.3.2.8" evidence="1"/>
<dbReference type="EMBL" id="CP000108">
    <property type="protein sequence ID" value="ABB27335.1"/>
    <property type="molecule type" value="Genomic_DNA"/>
</dbReference>
<dbReference type="SMR" id="Q3ANV2"/>
<dbReference type="STRING" id="340177.Cag_0056"/>
<dbReference type="KEGG" id="cch:Cag_0056"/>
<dbReference type="eggNOG" id="COG0773">
    <property type="taxonomic scope" value="Bacteria"/>
</dbReference>
<dbReference type="HOGENOM" id="CLU_028104_2_2_10"/>
<dbReference type="OrthoDB" id="9804126at2"/>
<dbReference type="UniPathway" id="UPA00219"/>
<dbReference type="GO" id="GO:0005737">
    <property type="term" value="C:cytoplasm"/>
    <property type="evidence" value="ECO:0007669"/>
    <property type="project" value="UniProtKB-SubCell"/>
</dbReference>
<dbReference type="GO" id="GO:0005524">
    <property type="term" value="F:ATP binding"/>
    <property type="evidence" value="ECO:0007669"/>
    <property type="project" value="UniProtKB-UniRule"/>
</dbReference>
<dbReference type="GO" id="GO:0008763">
    <property type="term" value="F:UDP-N-acetylmuramate-L-alanine ligase activity"/>
    <property type="evidence" value="ECO:0007669"/>
    <property type="project" value="UniProtKB-UniRule"/>
</dbReference>
<dbReference type="GO" id="GO:0051301">
    <property type="term" value="P:cell division"/>
    <property type="evidence" value="ECO:0007669"/>
    <property type="project" value="UniProtKB-KW"/>
</dbReference>
<dbReference type="GO" id="GO:0071555">
    <property type="term" value="P:cell wall organization"/>
    <property type="evidence" value="ECO:0007669"/>
    <property type="project" value="UniProtKB-KW"/>
</dbReference>
<dbReference type="GO" id="GO:0009252">
    <property type="term" value="P:peptidoglycan biosynthetic process"/>
    <property type="evidence" value="ECO:0007669"/>
    <property type="project" value="UniProtKB-UniRule"/>
</dbReference>
<dbReference type="GO" id="GO:0008360">
    <property type="term" value="P:regulation of cell shape"/>
    <property type="evidence" value="ECO:0007669"/>
    <property type="project" value="UniProtKB-KW"/>
</dbReference>
<dbReference type="Gene3D" id="3.90.190.20">
    <property type="entry name" value="Mur ligase, C-terminal domain"/>
    <property type="match status" value="1"/>
</dbReference>
<dbReference type="Gene3D" id="3.40.1190.10">
    <property type="entry name" value="Mur-like, catalytic domain"/>
    <property type="match status" value="1"/>
</dbReference>
<dbReference type="Gene3D" id="3.40.50.720">
    <property type="entry name" value="NAD(P)-binding Rossmann-like Domain"/>
    <property type="match status" value="1"/>
</dbReference>
<dbReference type="HAMAP" id="MF_00046">
    <property type="entry name" value="MurC"/>
    <property type="match status" value="1"/>
</dbReference>
<dbReference type="InterPro" id="IPR036565">
    <property type="entry name" value="Mur-like_cat_sf"/>
</dbReference>
<dbReference type="InterPro" id="IPR004101">
    <property type="entry name" value="Mur_ligase_C"/>
</dbReference>
<dbReference type="InterPro" id="IPR036615">
    <property type="entry name" value="Mur_ligase_C_dom_sf"/>
</dbReference>
<dbReference type="InterPro" id="IPR013221">
    <property type="entry name" value="Mur_ligase_cen"/>
</dbReference>
<dbReference type="InterPro" id="IPR000713">
    <property type="entry name" value="Mur_ligase_N"/>
</dbReference>
<dbReference type="InterPro" id="IPR050061">
    <property type="entry name" value="MurCDEF_pg_biosynth"/>
</dbReference>
<dbReference type="InterPro" id="IPR005758">
    <property type="entry name" value="UDP-N-AcMur_Ala_ligase_MurC"/>
</dbReference>
<dbReference type="NCBIfam" id="TIGR01082">
    <property type="entry name" value="murC"/>
    <property type="match status" value="1"/>
</dbReference>
<dbReference type="PANTHER" id="PTHR43445:SF3">
    <property type="entry name" value="UDP-N-ACETYLMURAMATE--L-ALANINE LIGASE"/>
    <property type="match status" value="1"/>
</dbReference>
<dbReference type="PANTHER" id="PTHR43445">
    <property type="entry name" value="UDP-N-ACETYLMURAMATE--L-ALANINE LIGASE-RELATED"/>
    <property type="match status" value="1"/>
</dbReference>
<dbReference type="Pfam" id="PF01225">
    <property type="entry name" value="Mur_ligase"/>
    <property type="match status" value="1"/>
</dbReference>
<dbReference type="Pfam" id="PF02875">
    <property type="entry name" value="Mur_ligase_C"/>
    <property type="match status" value="1"/>
</dbReference>
<dbReference type="Pfam" id="PF08245">
    <property type="entry name" value="Mur_ligase_M"/>
    <property type="match status" value="1"/>
</dbReference>
<dbReference type="SUPFAM" id="SSF51984">
    <property type="entry name" value="MurCD N-terminal domain"/>
    <property type="match status" value="1"/>
</dbReference>
<dbReference type="SUPFAM" id="SSF53623">
    <property type="entry name" value="MurD-like peptide ligases, catalytic domain"/>
    <property type="match status" value="1"/>
</dbReference>
<dbReference type="SUPFAM" id="SSF53244">
    <property type="entry name" value="MurD-like peptide ligases, peptide-binding domain"/>
    <property type="match status" value="1"/>
</dbReference>
<comment type="function">
    <text evidence="1">Cell wall formation.</text>
</comment>
<comment type="catalytic activity">
    <reaction evidence="1">
        <text>UDP-N-acetyl-alpha-D-muramate + L-alanine + ATP = UDP-N-acetyl-alpha-D-muramoyl-L-alanine + ADP + phosphate + H(+)</text>
        <dbReference type="Rhea" id="RHEA:23372"/>
        <dbReference type="ChEBI" id="CHEBI:15378"/>
        <dbReference type="ChEBI" id="CHEBI:30616"/>
        <dbReference type="ChEBI" id="CHEBI:43474"/>
        <dbReference type="ChEBI" id="CHEBI:57972"/>
        <dbReference type="ChEBI" id="CHEBI:70757"/>
        <dbReference type="ChEBI" id="CHEBI:83898"/>
        <dbReference type="ChEBI" id="CHEBI:456216"/>
        <dbReference type="EC" id="6.3.2.8"/>
    </reaction>
</comment>
<comment type="pathway">
    <text evidence="1">Cell wall biogenesis; peptidoglycan biosynthesis.</text>
</comment>
<comment type="subcellular location">
    <subcellularLocation>
        <location evidence="1">Cytoplasm</location>
    </subcellularLocation>
</comment>
<comment type="similarity">
    <text evidence="1">Belongs to the MurCDEF family.</text>
</comment>
<evidence type="ECO:0000255" key="1">
    <source>
        <dbReference type="HAMAP-Rule" id="MF_00046"/>
    </source>
</evidence>
<gene>
    <name evidence="1" type="primary">murC</name>
    <name type="ordered locus">Cag_0056</name>
</gene>
<name>MURC_CHLCH</name>
<feature type="chain" id="PRO_0000242551" description="UDP-N-acetylmuramate--L-alanine ligase">
    <location>
        <begin position="1"/>
        <end position="467"/>
    </location>
</feature>
<feature type="binding site" evidence="1">
    <location>
        <begin position="114"/>
        <end position="120"/>
    </location>
    <ligand>
        <name>ATP</name>
        <dbReference type="ChEBI" id="CHEBI:30616"/>
    </ligand>
</feature>
<proteinExistence type="inferred from homology"/>
<keyword id="KW-0067">ATP-binding</keyword>
<keyword id="KW-0131">Cell cycle</keyword>
<keyword id="KW-0132">Cell division</keyword>
<keyword id="KW-0133">Cell shape</keyword>
<keyword id="KW-0961">Cell wall biogenesis/degradation</keyword>
<keyword id="KW-0963">Cytoplasm</keyword>
<keyword id="KW-0436">Ligase</keyword>
<keyword id="KW-0547">Nucleotide-binding</keyword>
<keyword id="KW-0573">Peptidoglycan synthesis</keyword>
<sequence length="467" mass="50756">MELGKTQRVHIVGIGGAGMSAIAELLLKSGFSVSGSDLSTGDVTDRLTAHGAVIYKGHQEGQVADSDVVVYSSAIRSEENVELRAALKAGIPVIKRDEMLGELMRYKSGICISGTHGKTTTTAMIATMLLEAGESPTVMIGGISDYLKGSTVVGEGKYMVIEADEYDRAFLKLTPTIAILNSLESEHMDTYGTLEELKQAFITFANKVPFYGRVICCVDWAEIRKIIPSLNRRYITFGIEEPADVMATDIVLLEGSTTFTIRAFGIEYPNVRIHVPGKHNVLNALAAFSTGLELGISPERLIAGLGCYSGMRRRFQVKYSGNNGLMVVDDYAHHPSEVKATVKAAKDGWQHSKVVAVFQPHLFSRTRDFADEYGWALSRADEVYIADIYPAREKAADHPGVTGELVANAVRKAGGKQVHFVNGMEELYTALQTHVAPQTLLLCMGAGDITHLATKVAVFCKEHNADH</sequence>
<organism>
    <name type="scientific">Chlorobium chlorochromatii (strain CaD3)</name>
    <dbReference type="NCBI Taxonomy" id="340177"/>
    <lineage>
        <taxon>Bacteria</taxon>
        <taxon>Pseudomonadati</taxon>
        <taxon>Chlorobiota</taxon>
        <taxon>Chlorobiia</taxon>
        <taxon>Chlorobiales</taxon>
        <taxon>Chlorobiaceae</taxon>
        <taxon>Chlorobium/Pelodictyon group</taxon>
        <taxon>Chlorobium</taxon>
    </lineage>
</organism>
<protein>
    <recommendedName>
        <fullName evidence="1">UDP-N-acetylmuramate--L-alanine ligase</fullName>
        <ecNumber evidence="1">6.3.2.8</ecNumber>
    </recommendedName>
    <alternativeName>
        <fullName evidence="1">UDP-N-acetylmuramoyl-L-alanine synthetase</fullName>
    </alternativeName>
</protein>